<reference key="1">
    <citation type="journal article" date="1995" name="Infect. Immun.">
        <title>Isolation and identification of a glutathione peroxidase homolog gene, gpxA, present in Neisseria meningitidis but absent in Neisseria gonorrhoeae.</title>
        <authorList>
            <person name="Moore T.D."/>
            <person name="Sparling P.F."/>
        </authorList>
    </citation>
    <scope>NUCLEOTIDE SEQUENCE [GENOMIC DNA]</scope>
    <source>
        <strain>FAM20 / Serogroup C</strain>
    </source>
</reference>
<sequence>MGIYDFQMKDAEGNAVDLSGYRGKVLLIVNTATRCGLTPQYEALQKLYAQYTAEGLEILDFPCNQFREQAPESSGEIAQVCMMKFGTKFKIFDKIEVNGANTAPLYAYLKSVKPQDKGNHLFKDFVLKLAALGEKRDEGDIKWNFTKFLVNRDGEVVERFAPSVTPEEIEADIRALL</sequence>
<comment type="function">
    <text>Important in the cellular metabolism or defense processes particular to this pathogen.</text>
</comment>
<comment type="similarity">
    <text evidence="2">Belongs to the glutathione peroxidase family.</text>
</comment>
<organism>
    <name type="scientific">Neisseria meningitidis serogroup C</name>
    <dbReference type="NCBI Taxonomy" id="135720"/>
    <lineage>
        <taxon>Bacteria</taxon>
        <taxon>Pseudomonadati</taxon>
        <taxon>Pseudomonadota</taxon>
        <taxon>Betaproteobacteria</taxon>
        <taxon>Neisseriales</taxon>
        <taxon>Neisseriaceae</taxon>
        <taxon>Neisseria</taxon>
    </lineage>
</organism>
<dbReference type="EMBL" id="L42112">
    <property type="protein sequence ID" value="AAA66162.1"/>
    <property type="molecule type" value="Genomic_DNA"/>
</dbReference>
<dbReference type="SMR" id="P0C2T0"/>
<dbReference type="OMA" id="TFPMTEK"/>
<dbReference type="GO" id="GO:0004601">
    <property type="term" value="F:peroxidase activity"/>
    <property type="evidence" value="ECO:0007669"/>
    <property type="project" value="UniProtKB-KW"/>
</dbReference>
<dbReference type="GO" id="GO:0034599">
    <property type="term" value="P:cellular response to oxidative stress"/>
    <property type="evidence" value="ECO:0007669"/>
    <property type="project" value="TreeGrafter"/>
</dbReference>
<dbReference type="CDD" id="cd00340">
    <property type="entry name" value="GSH_Peroxidase"/>
    <property type="match status" value="1"/>
</dbReference>
<dbReference type="FunFam" id="3.40.30.10:FF:000349">
    <property type="entry name" value="Glutathione peroxidase"/>
    <property type="match status" value="1"/>
</dbReference>
<dbReference type="Gene3D" id="3.40.30.10">
    <property type="entry name" value="Glutaredoxin"/>
    <property type="match status" value="1"/>
</dbReference>
<dbReference type="InterPro" id="IPR000889">
    <property type="entry name" value="Glutathione_peroxidase"/>
</dbReference>
<dbReference type="InterPro" id="IPR029759">
    <property type="entry name" value="GPX_AS"/>
</dbReference>
<dbReference type="InterPro" id="IPR029760">
    <property type="entry name" value="GPX_CS"/>
</dbReference>
<dbReference type="InterPro" id="IPR036249">
    <property type="entry name" value="Thioredoxin-like_sf"/>
</dbReference>
<dbReference type="PANTHER" id="PTHR11592">
    <property type="entry name" value="GLUTATHIONE PEROXIDASE"/>
    <property type="match status" value="1"/>
</dbReference>
<dbReference type="PANTHER" id="PTHR11592:SF78">
    <property type="entry name" value="GLUTATHIONE PEROXIDASE"/>
    <property type="match status" value="1"/>
</dbReference>
<dbReference type="Pfam" id="PF00255">
    <property type="entry name" value="GSHPx"/>
    <property type="match status" value="1"/>
</dbReference>
<dbReference type="PIRSF" id="PIRSF000303">
    <property type="entry name" value="Glutathion_perox"/>
    <property type="match status" value="1"/>
</dbReference>
<dbReference type="PRINTS" id="PR01011">
    <property type="entry name" value="GLUTPROXDASE"/>
</dbReference>
<dbReference type="SUPFAM" id="SSF52833">
    <property type="entry name" value="Thioredoxin-like"/>
    <property type="match status" value="1"/>
</dbReference>
<dbReference type="PROSITE" id="PS00460">
    <property type="entry name" value="GLUTATHIONE_PEROXID_1"/>
    <property type="match status" value="1"/>
</dbReference>
<dbReference type="PROSITE" id="PS00763">
    <property type="entry name" value="GLUTATHIONE_PEROXID_2"/>
    <property type="match status" value="1"/>
</dbReference>
<dbReference type="PROSITE" id="PS51355">
    <property type="entry name" value="GLUTATHIONE_PEROXID_3"/>
    <property type="match status" value="1"/>
</dbReference>
<proteinExistence type="inferred from homology"/>
<feature type="chain" id="PRO_0000066660" description="Glutathione peroxidase homolog">
    <location>
        <begin position="1"/>
        <end position="177"/>
    </location>
</feature>
<feature type="active site" evidence="1">
    <location>
        <position position="35"/>
    </location>
</feature>
<evidence type="ECO:0000250" key="1"/>
<evidence type="ECO:0000305" key="2"/>
<name>GPXA_NEIMC</name>
<protein>
    <recommendedName>
        <fullName>Glutathione peroxidase homolog</fullName>
    </recommendedName>
</protein>
<keyword id="KW-0560">Oxidoreductase</keyword>
<keyword id="KW-0575">Peroxidase</keyword>
<accession>P0C2T0</accession>
<accession>P0A0T6</accession>
<accession>P52036</accession>
<gene>
    <name type="primary">gpxA</name>
    <name type="synonym">gph</name>
</gene>